<gene>
    <name evidence="1" type="primary">glgA</name>
    <name type="ordered locus">RB6654</name>
</gene>
<sequence length="507" mass="56321">MNIVYLTTEAVPFAKTGGLADVCGTLPKVVAAQGHRCAVIMPAFSSIERSLQPIETTDISFAVPMSDQKLIGCRLLKSHLPKDPNDPEDSAEVPVYFIDQPQYFRRPSLYGDANGDYHDNAERFIFYCRAAIIAMTRLGYPVDLVHCNDWQSALVPALLRAASDNVAKTQPIATMLSIHNMAYQGNFGFDAFPWTGLSWDHFRPESFEYYNQLNFLKTGVVTSDVVSTVSPTYALEIQTPEYGCGLDSILQGIPQPVAGIINGIDTNIWNPETDPHLKRNYSVVDWADAKIDNKLALQAEVGLPQDPDVPLLGLIGRLADQKGWDLILPVLKQHLAEARPTQWVVLGSGDPKIEEQLRELTEQHPEQLAAYIGFSDALAHRIEASSDMFIMPSHYEPCGLNQLYSLRYGTPCVVTKTGGLADTIVDATPENVAANLATGFHLNDSSAGALDHAINRALQLRYHSPEKWKNLVEFGMSQDWTWRKSADQYIQLYARTISLNRRRRSGS</sequence>
<accession>Q7UPY2</accession>
<organism>
    <name type="scientific">Rhodopirellula baltica (strain DSM 10527 / NCIMB 13988 / SH1)</name>
    <dbReference type="NCBI Taxonomy" id="243090"/>
    <lineage>
        <taxon>Bacteria</taxon>
        <taxon>Pseudomonadati</taxon>
        <taxon>Planctomycetota</taxon>
        <taxon>Planctomycetia</taxon>
        <taxon>Pirellulales</taxon>
        <taxon>Pirellulaceae</taxon>
        <taxon>Rhodopirellula</taxon>
    </lineage>
</organism>
<comment type="function">
    <text evidence="1">Synthesizes alpha-1,4-glucan chains using ADP-glucose.</text>
</comment>
<comment type="catalytic activity">
    <reaction evidence="1">
        <text>[(1-&gt;4)-alpha-D-glucosyl](n) + ADP-alpha-D-glucose = [(1-&gt;4)-alpha-D-glucosyl](n+1) + ADP + H(+)</text>
        <dbReference type="Rhea" id="RHEA:18189"/>
        <dbReference type="Rhea" id="RHEA-COMP:9584"/>
        <dbReference type="Rhea" id="RHEA-COMP:9587"/>
        <dbReference type="ChEBI" id="CHEBI:15378"/>
        <dbReference type="ChEBI" id="CHEBI:15444"/>
        <dbReference type="ChEBI" id="CHEBI:57498"/>
        <dbReference type="ChEBI" id="CHEBI:456216"/>
        <dbReference type="EC" id="2.4.1.21"/>
    </reaction>
</comment>
<comment type="pathway">
    <text evidence="1">Glycan biosynthesis; glycogen biosynthesis.</text>
</comment>
<comment type="similarity">
    <text evidence="1">Belongs to the glycosyltransferase 1 family. Bacterial/plant glycogen synthase subfamily.</text>
</comment>
<evidence type="ECO:0000255" key="1">
    <source>
        <dbReference type="HAMAP-Rule" id="MF_00484"/>
    </source>
</evidence>
<proteinExistence type="inferred from homology"/>
<feature type="chain" id="PRO_0000188640" description="Glycogen synthase">
    <location>
        <begin position="1"/>
        <end position="507"/>
    </location>
</feature>
<feature type="binding site" evidence="1">
    <location>
        <position position="15"/>
    </location>
    <ligand>
        <name>ADP-alpha-D-glucose</name>
        <dbReference type="ChEBI" id="CHEBI:57498"/>
    </ligand>
</feature>
<keyword id="KW-0320">Glycogen biosynthesis</keyword>
<keyword id="KW-0328">Glycosyltransferase</keyword>
<keyword id="KW-1185">Reference proteome</keyword>
<keyword id="KW-0808">Transferase</keyword>
<protein>
    <recommendedName>
        <fullName evidence="1">Glycogen synthase</fullName>
        <ecNumber evidence="1">2.4.1.21</ecNumber>
    </recommendedName>
    <alternativeName>
        <fullName evidence="1">Starch [bacterial glycogen] synthase</fullName>
    </alternativeName>
</protein>
<reference key="1">
    <citation type="journal article" date="2003" name="Proc. Natl. Acad. Sci. U.S.A.">
        <title>Complete genome sequence of the marine planctomycete Pirellula sp. strain 1.</title>
        <authorList>
            <person name="Gloeckner F.O."/>
            <person name="Kube M."/>
            <person name="Bauer M."/>
            <person name="Teeling H."/>
            <person name="Lombardot T."/>
            <person name="Ludwig W."/>
            <person name="Gade D."/>
            <person name="Beck A."/>
            <person name="Borzym K."/>
            <person name="Heitmann K."/>
            <person name="Rabus R."/>
            <person name="Schlesner H."/>
            <person name="Amann R."/>
            <person name="Reinhardt R."/>
        </authorList>
    </citation>
    <scope>NUCLEOTIDE SEQUENCE [LARGE SCALE GENOMIC DNA]</scope>
    <source>
        <strain>DSM 10527 / NCIMB 13988 / SH1</strain>
    </source>
</reference>
<name>GLGA_RHOBA</name>
<dbReference type="EC" id="2.4.1.21" evidence="1"/>
<dbReference type="EMBL" id="BX294144">
    <property type="protein sequence ID" value="CAD74926.1"/>
    <property type="molecule type" value="Genomic_DNA"/>
</dbReference>
<dbReference type="RefSeq" id="NP_867380.1">
    <property type="nucleotide sequence ID" value="NC_005027.1"/>
</dbReference>
<dbReference type="RefSeq" id="WP_011121026.1">
    <property type="nucleotide sequence ID" value="NC_005027.1"/>
</dbReference>
<dbReference type="SMR" id="Q7UPY2"/>
<dbReference type="FunCoup" id="Q7UPY2">
    <property type="interactions" value="252"/>
</dbReference>
<dbReference type="STRING" id="243090.RB6654"/>
<dbReference type="CAZy" id="GT5">
    <property type="family name" value="Glycosyltransferase Family 5"/>
</dbReference>
<dbReference type="EnsemblBacteria" id="CAD74926">
    <property type="protein sequence ID" value="CAD74926"/>
    <property type="gene ID" value="RB6654"/>
</dbReference>
<dbReference type="KEGG" id="rba:RB6654"/>
<dbReference type="PATRIC" id="fig|243090.15.peg.3224"/>
<dbReference type="eggNOG" id="COG0297">
    <property type="taxonomic scope" value="Bacteria"/>
</dbReference>
<dbReference type="HOGENOM" id="CLU_009583_18_5_0"/>
<dbReference type="InParanoid" id="Q7UPY2"/>
<dbReference type="OrthoDB" id="9808590at2"/>
<dbReference type="UniPathway" id="UPA00164"/>
<dbReference type="Proteomes" id="UP000001025">
    <property type="component" value="Chromosome"/>
</dbReference>
<dbReference type="GO" id="GO:0009011">
    <property type="term" value="F:alpha-1,4-glucan glucosyltransferase (ADP-glucose donor) activity"/>
    <property type="evidence" value="ECO:0007669"/>
    <property type="project" value="UniProtKB-UniRule"/>
</dbReference>
<dbReference type="GO" id="GO:0004373">
    <property type="term" value="F:alpha-1,4-glucan glucosyltransferase (UDP-glucose donor) activity"/>
    <property type="evidence" value="ECO:0007669"/>
    <property type="project" value="InterPro"/>
</dbReference>
<dbReference type="GO" id="GO:0005978">
    <property type="term" value="P:glycogen biosynthetic process"/>
    <property type="evidence" value="ECO:0007669"/>
    <property type="project" value="UniProtKB-UniRule"/>
</dbReference>
<dbReference type="CDD" id="cd03791">
    <property type="entry name" value="GT5_Glycogen_synthase_DULL1-like"/>
    <property type="match status" value="1"/>
</dbReference>
<dbReference type="Gene3D" id="3.40.50.2000">
    <property type="entry name" value="Glycogen Phosphorylase B"/>
    <property type="match status" value="2"/>
</dbReference>
<dbReference type="HAMAP" id="MF_00484">
    <property type="entry name" value="Glycogen_synth"/>
    <property type="match status" value="1"/>
</dbReference>
<dbReference type="InterPro" id="IPR001296">
    <property type="entry name" value="Glyco_trans_1"/>
</dbReference>
<dbReference type="InterPro" id="IPR011835">
    <property type="entry name" value="GS/SS"/>
</dbReference>
<dbReference type="InterPro" id="IPR013534">
    <property type="entry name" value="Starch_synth_cat_dom"/>
</dbReference>
<dbReference type="NCBIfam" id="TIGR02095">
    <property type="entry name" value="glgA"/>
    <property type="match status" value="1"/>
</dbReference>
<dbReference type="NCBIfam" id="NF001899">
    <property type="entry name" value="PRK00654.1-2"/>
    <property type="match status" value="1"/>
</dbReference>
<dbReference type="PANTHER" id="PTHR45825:SF11">
    <property type="entry name" value="ALPHA AMYLASE DOMAIN-CONTAINING PROTEIN"/>
    <property type="match status" value="1"/>
</dbReference>
<dbReference type="PANTHER" id="PTHR45825">
    <property type="entry name" value="GRANULE-BOUND STARCH SYNTHASE 1, CHLOROPLASTIC/AMYLOPLASTIC"/>
    <property type="match status" value="1"/>
</dbReference>
<dbReference type="Pfam" id="PF08323">
    <property type="entry name" value="Glyco_transf_5"/>
    <property type="match status" value="1"/>
</dbReference>
<dbReference type="Pfam" id="PF00534">
    <property type="entry name" value="Glycos_transf_1"/>
    <property type="match status" value="1"/>
</dbReference>
<dbReference type="SUPFAM" id="SSF53756">
    <property type="entry name" value="UDP-Glycosyltransferase/glycogen phosphorylase"/>
    <property type="match status" value="1"/>
</dbReference>